<comment type="function">
    <text evidence="1">Catalyzes the attachment of glutamate to tRNA(Glu) in a two-step reaction: glutamate is first activated by ATP to form Glu-AMP and then transferred to the acceptor end of tRNA(Glu).</text>
</comment>
<comment type="catalytic activity">
    <reaction evidence="1">
        <text>tRNA(Glu) + L-glutamate + ATP = L-glutamyl-tRNA(Glu) + AMP + diphosphate</text>
        <dbReference type="Rhea" id="RHEA:23540"/>
        <dbReference type="Rhea" id="RHEA-COMP:9663"/>
        <dbReference type="Rhea" id="RHEA-COMP:9680"/>
        <dbReference type="ChEBI" id="CHEBI:29985"/>
        <dbReference type="ChEBI" id="CHEBI:30616"/>
        <dbReference type="ChEBI" id="CHEBI:33019"/>
        <dbReference type="ChEBI" id="CHEBI:78442"/>
        <dbReference type="ChEBI" id="CHEBI:78520"/>
        <dbReference type="ChEBI" id="CHEBI:456215"/>
        <dbReference type="EC" id="6.1.1.17"/>
    </reaction>
</comment>
<comment type="cofactor">
    <cofactor evidence="1">
        <name>Zn(2+)</name>
        <dbReference type="ChEBI" id="CHEBI:29105"/>
    </cofactor>
    <text evidence="1">Binds 1 zinc ion per subunit.</text>
</comment>
<comment type="subunit">
    <text evidence="1">Monomer.</text>
</comment>
<comment type="subcellular location">
    <subcellularLocation>
        <location evidence="1">Cytoplasm</location>
    </subcellularLocation>
</comment>
<comment type="similarity">
    <text evidence="1">Belongs to the class-I aminoacyl-tRNA synthetase family. Glutamate--tRNA ligase type 1 subfamily.</text>
</comment>
<reference key="1">
    <citation type="journal article" date="2007" name="Proc. Natl. Acad. Sci. U.S.A.">
        <title>Genome and proteome of long-chain alkane degrading Geobacillus thermodenitrificans NG80-2 isolated from a deep-subsurface oil reservoir.</title>
        <authorList>
            <person name="Feng L."/>
            <person name="Wang W."/>
            <person name="Cheng J."/>
            <person name="Ren Y."/>
            <person name="Zhao G."/>
            <person name="Gao C."/>
            <person name="Tang Y."/>
            <person name="Liu X."/>
            <person name="Han W."/>
            <person name="Peng X."/>
            <person name="Liu R."/>
            <person name="Wang L."/>
        </authorList>
    </citation>
    <scope>NUCLEOTIDE SEQUENCE [LARGE SCALE GENOMIC DNA]</scope>
    <source>
        <strain>NG80-2</strain>
    </source>
</reference>
<keyword id="KW-0030">Aminoacyl-tRNA synthetase</keyword>
<keyword id="KW-0067">ATP-binding</keyword>
<keyword id="KW-0963">Cytoplasm</keyword>
<keyword id="KW-0436">Ligase</keyword>
<keyword id="KW-0479">Metal-binding</keyword>
<keyword id="KW-0547">Nucleotide-binding</keyword>
<keyword id="KW-0648">Protein biosynthesis</keyword>
<keyword id="KW-0862">Zinc</keyword>
<dbReference type="EC" id="6.1.1.17" evidence="1"/>
<dbReference type="EMBL" id="CP000557">
    <property type="protein sequence ID" value="ABO65470.1"/>
    <property type="molecule type" value="Genomic_DNA"/>
</dbReference>
<dbReference type="RefSeq" id="WP_011886623.1">
    <property type="nucleotide sequence ID" value="NC_009328.1"/>
</dbReference>
<dbReference type="SMR" id="A4IJG6"/>
<dbReference type="KEGG" id="gtn:GTNG_0083"/>
<dbReference type="eggNOG" id="COG0008">
    <property type="taxonomic scope" value="Bacteria"/>
</dbReference>
<dbReference type="HOGENOM" id="CLU_015768_6_1_9"/>
<dbReference type="Proteomes" id="UP000001578">
    <property type="component" value="Chromosome"/>
</dbReference>
<dbReference type="GO" id="GO:0005829">
    <property type="term" value="C:cytosol"/>
    <property type="evidence" value="ECO:0007669"/>
    <property type="project" value="TreeGrafter"/>
</dbReference>
<dbReference type="GO" id="GO:0005524">
    <property type="term" value="F:ATP binding"/>
    <property type="evidence" value="ECO:0007669"/>
    <property type="project" value="UniProtKB-UniRule"/>
</dbReference>
<dbReference type="GO" id="GO:0004818">
    <property type="term" value="F:glutamate-tRNA ligase activity"/>
    <property type="evidence" value="ECO:0007669"/>
    <property type="project" value="UniProtKB-UniRule"/>
</dbReference>
<dbReference type="GO" id="GO:0000049">
    <property type="term" value="F:tRNA binding"/>
    <property type="evidence" value="ECO:0007669"/>
    <property type="project" value="InterPro"/>
</dbReference>
<dbReference type="GO" id="GO:0008270">
    <property type="term" value="F:zinc ion binding"/>
    <property type="evidence" value="ECO:0007669"/>
    <property type="project" value="UniProtKB-UniRule"/>
</dbReference>
<dbReference type="GO" id="GO:0006424">
    <property type="term" value="P:glutamyl-tRNA aminoacylation"/>
    <property type="evidence" value="ECO:0007669"/>
    <property type="project" value="UniProtKB-UniRule"/>
</dbReference>
<dbReference type="CDD" id="cd00808">
    <property type="entry name" value="GluRS_core"/>
    <property type="match status" value="1"/>
</dbReference>
<dbReference type="FunFam" id="1.10.10.350:FF:000002">
    <property type="entry name" value="Glutamate--tRNA ligase"/>
    <property type="match status" value="1"/>
</dbReference>
<dbReference type="FunFam" id="3.40.50.620:FF:000007">
    <property type="entry name" value="Glutamate--tRNA ligase"/>
    <property type="match status" value="1"/>
</dbReference>
<dbReference type="Gene3D" id="1.10.10.350">
    <property type="match status" value="1"/>
</dbReference>
<dbReference type="Gene3D" id="3.40.50.620">
    <property type="entry name" value="HUPs"/>
    <property type="match status" value="1"/>
</dbReference>
<dbReference type="HAMAP" id="MF_00022">
    <property type="entry name" value="Glu_tRNA_synth_type1"/>
    <property type="match status" value="1"/>
</dbReference>
<dbReference type="InterPro" id="IPR045462">
    <property type="entry name" value="aa-tRNA-synth_I_cd-bd"/>
</dbReference>
<dbReference type="InterPro" id="IPR020751">
    <property type="entry name" value="aa-tRNA-synth_I_codon-bd_sub2"/>
</dbReference>
<dbReference type="InterPro" id="IPR001412">
    <property type="entry name" value="aa-tRNA-synth_I_CS"/>
</dbReference>
<dbReference type="InterPro" id="IPR008925">
    <property type="entry name" value="aa_tRNA-synth_I_cd-bd_sf"/>
</dbReference>
<dbReference type="InterPro" id="IPR004527">
    <property type="entry name" value="Glu-tRNA-ligase_bac/mito"/>
</dbReference>
<dbReference type="InterPro" id="IPR000924">
    <property type="entry name" value="Glu/Gln-tRNA-synth"/>
</dbReference>
<dbReference type="InterPro" id="IPR020058">
    <property type="entry name" value="Glu/Gln-tRNA-synth_Ib_cat-dom"/>
</dbReference>
<dbReference type="InterPro" id="IPR049940">
    <property type="entry name" value="GluQ/Sye"/>
</dbReference>
<dbReference type="InterPro" id="IPR033910">
    <property type="entry name" value="GluRS_core"/>
</dbReference>
<dbReference type="InterPro" id="IPR014729">
    <property type="entry name" value="Rossmann-like_a/b/a_fold"/>
</dbReference>
<dbReference type="NCBIfam" id="TIGR00464">
    <property type="entry name" value="gltX_bact"/>
    <property type="match status" value="1"/>
</dbReference>
<dbReference type="PANTHER" id="PTHR43311">
    <property type="entry name" value="GLUTAMATE--TRNA LIGASE"/>
    <property type="match status" value="1"/>
</dbReference>
<dbReference type="PANTHER" id="PTHR43311:SF2">
    <property type="entry name" value="GLUTAMATE--TRNA LIGASE, MITOCHONDRIAL-RELATED"/>
    <property type="match status" value="1"/>
</dbReference>
<dbReference type="Pfam" id="PF19269">
    <property type="entry name" value="Anticodon_2"/>
    <property type="match status" value="1"/>
</dbReference>
<dbReference type="Pfam" id="PF00749">
    <property type="entry name" value="tRNA-synt_1c"/>
    <property type="match status" value="1"/>
</dbReference>
<dbReference type="PRINTS" id="PR00987">
    <property type="entry name" value="TRNASYNTHGLU"/>
</dbReference>
<dbReference type="SUPFAM" id="SSF48163">
    <property type="entry name" value="An anticodon-binding domain of class I aminoacyl-tRNA synthetases"/>
    <property type="match status" value="1"/>
</dbReference>
<dbReference type="SUPFAM" id="SSF52374">
    <property type="entry name" value="Nucleotidylyl transferase"/>
    <property type="match status" value="1"/>
</dbReference>
<dbReference type="PROSITE" id="PS00178">
    <property type="entry name" value="AA_TRNA_LIGASE_I"/>
    <property type="match status" value="1"/>
</dbReference>
<organism>
    <name type="scientific">Geobacillus thermodenitrificans (strain NG80-2)</name>
    <dbReference type="NCBI Taxonomy" id="420246"/>
    <lineage>
        <taxon>Bacteria</taxon>
        <taxon>Bacillati</taxon>
        <taxon>Bacillota</taxon>
        <taxon>Bacilli</taxon>
        <taxon>Bacillales</taxon>
        <taxon>Anoxybacillaceae</taxon>
        <taxon>Geobacillus</taxon>
    </lineage>
</organism>
<protein>
    <recommendedName>
        <fullName evidence="1">Glutamate--tRNA ligase</fullName>
        <ecNumber evidence="1">6.1.1.17</ecNumber>
    </recommendedName>
    <alternativeName>
        <fullName evidence="1">Glutamyl-tRNA synthetase</fullName>
        <shortName evidence="1">GluRS</shortName>
    </alternativeName>
</protein>
<evidence type="ECO:0000255" key="1">
    <source>
        <dbReference type="HAMAP-Rule" id="MF_00022"/>
    </source>
</evidence>
<sequence>MAKNVRVRYAPSPTGHLHIGGARTALFNYLFARHYGGKMVVRIEDTDIERNVEGGEESQLENLKWLGIDYDESIDKDGGYGPYRQTERLDIYRKYVNELLEQGHAYKCFCTPEELEREREEQRAAGIAAPQYSGKCRHLTPEQVAELEAQGKPYTIRLKVPEGKTYEVDDLVRGKVTFESKDIGDWVIVKANGIPTYNFAVVIDDHLMEISHVFRGEEHLSNTPKQLMVYEYFGWEPPQFAHMTLIVNEQRKKLSKRDESIIQFVSQYKELGYLPEAMFNFFALLGWSPEGEEEIFTKDELIRIFDVARLSKSPSMFDTKKLTWMNNQYIKKLDLDRLVELALPHLVKAGRLPADMSDEQRQWARDLIALYQEQMSYGAEIVSLSELFFKEEVEYEDEARQVLAEEQVPDVLSAFLANVRELEPFTADEIKAAIKAVQKSTGQKGKKLFMPIRAAVTGQTHGPELPFAIQLLGKQKVIERLERALHEKF</sequence>
<feature type="chain" id="PRO_1000001906" description="Glutamate--tRNA ligase">
    <location>
        <begin position="1"/>
        <end position="489"/>
    </location>
</feature>
<feature type="short sequence motif" description="'HIGH' region" evidence="1">
    <location>
        <begin position="11"/>
        <end position="21"/>
    </location>
</feature>
<feature type="short sequence motif" description="'KMSKS' region" evidence="1">
    <location>
        <begin position="253"/>
        <end position="257"/>
    </location>
</feature>
<feature type="binding site" evidence="1">
    <location>
        <position position="108"/>
    </location>
    <ligand>
        <name>Zn(2+)</name>
        <dbReference type="ChEBI" id="CHEBI:29105"/>
    </ligand>
</feature>
<feature type="binding site" evidence="1">
    <location>
        <position position="110"/>
    </location>
    <ligand>
        <name>Zn(2+)</name>
        <dbReference type="ChEBI" id="CHEBI:29105"/>
    </ligand>
</feature>
<feature type="binding site" evidence="1">
    <location>
        <position position="136"/>
    </location>
    <ligand>
        <name>Zn(2+)</name>
        <dbReference type="ChEBI" id="CHEBI:29105"/>
    </ligand>
</feature>
<feature type="binding site" evidence="1">
    <location>
        <position position="138"/>
    </location>
    <ligand>
        <name>Zn(2+)</name>
        <dbReference type="ChEBI" id="CHEBI:29105"/>
    </ligand>
</feature>
<feature type="binding site" evidence="1">
    <location>
        <position position="256"/>
    </location>
    <ligand>
        <name>ATP</name>
        <dbReference type="ChEBI" id="CHEBI:30616"/>
    </ligand>
</feature>
<accession>A4IJG6</accession>
<proteinExistence type="inferred from homology"/>
<gene>
    <name evidence="1" type="primary">gltX</name>
    <name type="ordered locus">GTNG_0083</name>
</gene>
<name>SYE_GEOTN</name>